<comment type="function">
    <text evidence="1">Probably plays a crucial role in the binding of the barbed end of actin filaments to the plasma membrane.</text>
</comment>
<comment type="subcellular location">
    <subcellularLocation>
        <location evidence="1">Cell membrane</location>
        <topology evidence="1">Peripheral membrane protein</topology>
        <orientation evidence="1">Cytoplasmic side</orientation>
    </subcellularLocation>
    <subcellularLocation>
        <location evidence="1">Cytoplasm</location>
        <location evidence="1">Cytoskeleton</location>
    </subcellularLocation>
</comment>
<keyword id="KW-0117">Actin capping</keyword>
<keyword id="KW-0009">Actin-binding</keyword>
<keyword id="KW-1003">Cell membrane</keyword>
<keyword id="KW-0963">Cytoplasm</keyword>
<keyword id="KW-0206">Cytoskeleton</keyword>
<keyword id="KW-0472">Membrane</keyword>
<keyword id="KW-1185">Reference proteome</keyword>
<feature type="chain" id="PRO_0000219424" description="Radixin">
    <location>
        <begin position="1"/>
        <end position="583"/>
    </location>
</feature>
<feature type="domain" description="FERM" evidence="2">
    <location>
        <begin position="5"/>
        <end position="295"/>
    </location>
</feature>
<feature type="region of interest" description="Disordered" evidence="3">
    <location>
        <begin position="310"/>
        <end position="336"/>
    </location>
</feature>
<feature type="region of interest" description="Disordered" evidence="3">
    <location>
        <begin position="436"/>
        <end position="527"/>
    </location>
</feature>
<feature type="compositionally biased region" description="Basic and acidic residues" evidence="3">
    <location>
        <begin position="436"/>
        <end position="447"/>
    </location>
</feature>
<feature type="compositionally biased region" description="Basic and acidic residues" evidence="3">
    <location>
        <begin position="455"/>
        <end position="464"/>
    </location>
</feature>
<feature type="compositionally biased region" description="Pro residues" evidence="3">
    <location>
        <begin position="469"/>
        <end position="480"/>
    </location>
</feature>
<feature type="compositionally biased region" description="Basic and acidic residues" evidence="3">
    <location>
        <begin position="483"/>
        <end position="492"/>
    </location>
</feature>
<feature type="compositionally biased region" description="Basic and acidic residues" evidence="3">
    <location>
        <begin position="506"/>
        <end position="525"/>
    </location>
</feature>
<feature type="binding site" evidence="1">
    <location>
        <begin position="60"/>
        <end position="63"/>
    </location>
    <ligand>
        <name>a 1,2-diacyl-sn-glycero-3-phospho-(1D-myo-inositol)</name>
        <dbReference type="ChEBI" id="CHEBI:57880"/>
    </ligand>
</feature>
<feature type="binding site" evidence="1">
    <location>
        <position position="278"/>
    </location>
    <ligand>
        <name>a 1,2-diacyl-sn-glycero-3-phospho-(1D-myo-inositol)</name>
        <dbReference type="ChEBI" id="CHEBI:57880"/>
    </ligand>
</feature>
<reference key="1">
    <citation type="journal article" date="2000" name="Biochim. Biophys. Acta">
        <title>Cloning and expression profile of chicken radixin.</title>
        <authorList>
            <person name="Li W."/>
            <person name="Crouch D.H."/>
        </authorList>
    </citation>
    <scope>NUCLEOTIDE SEQUENCE [MRNA]</scope>
</reference>
<sequence length="583" mass="68555">MPKPINVRVTTMDAELEFAIQPNTTGKQLFDQVVKTVGLREVWFFGLQYVDSKGYSTWLKLNKKVTQQDVRKENPLQFKFRAKFFPEDVSEELIQEITQRLFFLQVKEAILNDEIYCPPETAVLLASYAVQSKYGDYNKEIHKLGYLANDRLLPQRVLEQHKLTKEQWEERIQNWHEEHRGMLREDSMMEYLKIAQDLEMYGVNYFEIKNKKGTELWLGVDALGLNIYEHDDKLTPKIGFPWSEIRNISFNDKKFVIKPIDKKAPDFVFYAPRLRINKRILALCMGNHELYMRRRKPDTIEVQQMKAQAREEKHQKQLERAQLENEKKKREIAEKEKERIEREKEELMERLRQIEEQTMKAQKELEEQTRRALELDQERKRAKEEAERLEKERRAAEEAKAALAKQAADQMKNQEQLAAELAEFTAKIALLEEAKKKKEEEASEWQHKAFAAQEDLEKTKEELKSVMSAPPPPPPPPVIPPTENEHDEHDENNAEASAELSSDGVMNHRSEEERVTETQKNERVKKQLQALSSELAQARDETKKTQNDVLHAENVKAGRGKYKTLRQIRQGNTKQRIDEFEAM</sequence>
<name>RADI_CHICK</name>
<evidence type="ECO:0000250" key="1"/>
<evidence type="ECO:0000255" key="2">
    <source>
        <dbReference type="PROSITE-ProRule" id="PRU00084"/>
    </source>
</evidence>
<evidence type="ECO:0000256" key="3">
    <source>
        <dbReference type="SAM" id="MobiDB-lite"/>
    </source>
</evidence>
<protein>
    <recommendedName>
        <fullName>Radixin</fullName>
    </recommendedName>
</protein>
<organism>
    <name type="scientific">Gallus gallus</name>
    <name type="common">Chicken</name>
    <dbReference type="NCBI Taxonomy" id="9031"/>
    <lineage>
        <taxon>Eukaryota</taxon>
        <taxon>Metazoa</taxon>
        <taxon>Chordata</taxon>
        <taxon>Craniata</taxon>
        <taxon>Vertebrata</taxon>
        <taxon>Euteleostomi</taxon>
        <taxon>Archelosauria</taxon>
        <taxon>Archosauria</taxon>
        <taxon>Dinosauria</taxon>
        <taxon>Saurischia</taxon>
        <taxon>Theropoda</taxon>
        <taxon>Coelurosauria</taxon>
        <taxon>Aves</taxon>
        <taxon>Neognathae</taxon>
        <taxon>Galloanserae</taxon>
        <taxon>Galliformes</taxon>
        <taxon>Phasianidae</taxon>
        <taxon>Phasianinae</taxon>
        <taxon>Gallus</taxon>
    </lineage>
</organism>
<dbReference type="EMBL" id="AJ249838">
    <property type="protein sequence ID" value="CAB59977.1"/>
    <property type="molecule type" value="mRNA"/>
</dbReference>
<dbReference type="RefSeq" id="NP_990082.1">
    <property type="nucleotide sequence ID" value="NM_204751.1"/>
</dbReference>
<dbReference type="SMR" id="Q9PU45"/>
<dbReference type="FunCoup" id="Q9PU45">
    <property type="interactions" value="2850"/>
</dbReference>
<dbReference type="IntAct" id="Q9PU45">
    <property type="interactions" value="1"/>
</dbReference>
<dbReference type="STRING" id="9031.ENSGALP00000021028"/>
<dbReference type="PaxDb" id="9031-ENSGALP00000021028"/>
<dbReference type="GeneID" id="395511"/>
<dbReference type="KEGG" id="gga:395511"/>
<dbReference type="CTD" id="5962"/>
<dbReference type="VEuPathDB" id="HostDB:geneid_395511"/>
<dbReference type="eggNOG" id="KOG3529">
    <property type="taxonomic scope" value="Eukaryota"/>
</dbReference>
<dbReference type="InParanoid" id="Q9PU45"/>
<dbReference type="OrthoDB" id="6018897at2759"/>
<dbReference type="PhylomeDB" id="Q9PU45"/>
<dbReference type="PRO" id="PR:Q9PU45"/>
<dbReference type="Proteomes" id="UP000000539">
    <property type="component" value="Unassembled WGS sequence"/>
</dbReference>
<dbReference type="GO" id="GO:0005912">
    <property type="term" value="C:adherens junction"/>
    <property type="evidence" value="ECO:0000318"/>
    <property type="project" value="GO_Central"/>
</dbReference>
<dbReference type="GO" id="GO:0045177">
    <property type="term" value="C:apical part of cell"/>
    <property type="evidence" value="ECO:0000318"/>
    <property type="project" value="GO_Central"/>
</dbReference>
<dbReference type="GO" id="GO:0005737">
    <property type="term" value="C:cytoplasm"/>
    <property type="evidence" value="ECO:0007669"/>
    <property type="project" value="UniProtKB-KW"/>
</dbReference>
<dbReference type="GO" id="GO:0005856">
    <property type="term" value="C:cytoskeleton"/>
    <property type="evidence" value="ECO:0007669"/>
    <property type="project" value="UniProtKB-SubCell"/>
</dbReference>
<dbReference type="GO" id="GO:0030175">
    <property type="term" value="C:filopodium"/>
    <property type="evidence" value="ECO:0000318"/>
    <property type="project" value="GO_Central"/>
</dbReference>
<dbReference type="GO" id="GO:0005902">
    <property type="term" value="C:microvillus"/>
    <property type="evidence" value="ECO:0000318"/>
    <property type="project" value="GO_Central"/>
</dbReference>
<dbReference type="GO" id="GO:0005886">
    <property type="term" value="C:plasma membrane"/>
    <property type="evidence" value="ECO:0000318"/>
    <property type="project" value="GO_Central"/>
</dbReference>
<dbReference type="GO" id="GO:0003779">
    <property type="term" value="F:actin binding"/>
    <property type="evidence" value="ECO:0000318"/>
    <property type="project" value="GO_Central"/>
</dbReference>
<dbReference type="GO" id="GO:0050839">
    <property type="term" value="F:cell adhesion molecule binding"/>
    <property type="evidence" value="ECO:0000318"/>
    <property type="project" value="GO_Central"/>
</dbReference>
<dbReference type="GO" id="GO:0051693">
    <property type="term" value="P:actin filament capping"/>
    <property type="evidence" value="ECO:0007669"/>
    <property type="project" value="UniProtKB-KW"/>
</dbReference>
<dbReference type="GO" id="GO:2000643">
    <property type="term" value="P:positive regulation of early endosome to late endosome transport"/>
    <property type="evidence" value="ECO:0000318"/>
    <property type="project" value="GO_Central"/>
</dbReference>
<dbReference type="GO" id="GO:1902966">
    <property type="term" value="P:positive regulation of protein localization to early endosome"/>
    <property type="evidence" value="ECO:0000318"/>
    <property type="project" value="GO_Central"/>
</dbReference>
<dbReference type="GO" id="GO:0008360">
    <property type="term" value="P:regulation of cell shape"/>
    <property type="evidence" value="ECO:0000318"/>
    <property type="project" value="GO_Central"/>
</dbReference>
<dbReference type="GO" id="GO:1902115">
    <property type="term" value="P:regulation of organelle assembly"/>
    <property type="evidence" value="ECO:0000318"/>
    <property type="project" value="GO_Central"/>
</dbReference>
<dbReference type="CDD" id="cd14473">
    <property type="entry name" value="FERM_B-lobe"/>
    <property type="match status" value="1"/>
</dbReference>
<dbReference type="CDD" id="cd13194">
    <property type="entry name" value="FERM_C_ERM"/>
    <property type="match status" value="1"/>
</dbReference>
<dbReference type="CDD" id="cd17187">
    <property type="entry name" value="FERM_F1_ERM"/>
    <property type="match status" value="1"/>
</dbReference>
<dbReference type="FunFam" id="2.30.29.30:FF:000003">
    <property type="entry name" value="Radixin isoform 1"/>
    <property type="match status" value="1"/>
</dbReference>
<dbReference type="FunFam" id="1.20.80.10:FF:000002">
    <property type="entry name" value="radixin isoform X1"/>
    <property type="match status" value="1"/>
</dbReference>
<dbReference type="FunFam" id="3.10.20.90:FF:000013">
    <property type="entry name" value="radixin isoform X1"/>
    <property type="match status" value="1"/>
</dbReference>
<dbReference type="FunFam" id="1.20.5.450:FF:000001">
    <property type="entry name" value="radixin isoform X2"/>
    <property type="match status" value="1"/>
</dbReference>
<dbReference type="Gene3D" id="1.20.5.450">
    <property type="match status" value="1"/>
</dbReference>
<dbReference type="Gene3D" id="1.20.80.10">
    <property type="match status" value="1"/>
</dbReference>
<dbReference type="Gene3D" id="6.10.360.10">
    <property type="match status" value="1"/>
</dbReference>
<dbReference type="Gene3D" id="3.10.20.90">
    <property type="entry name" value="Phosphatidylinositol 3-kinase Catalytic Subunit, Chain A, domain 1"/>
    <property type="match status" value="1"/>
</dbReference>
<dbReference type="Gene3D" id="2.30.29.30">
    <property type="entry name" value="Pleckstrin-homology domain (PH domain)/Phosphotyrosine-binding domain (PTB)"/>
    <property type="match status" value="1"/>
</dbReference>
<dbReference type="InterPro" id="IPR019749">
    <property type="entry name" value="Band_41_domain"/>
</dbReference>
<dbReference type="InterPro" id="IPR011174">
    <property type="entry name" value="ERM"/>
</dbReference>
<dbReference type="InterPro" id="IPR011259">
    <property type="entry name" value="ERM_C_dom"/>
</dbReference>
<dbReference type="InterPro" id="IPR041789">
    <property type="entry name" value="ERM_FERM_C"/>
</dbReference>
<dbReference type="InterPro" id="IPR046810">
    <property type="entry name" value="ERM_helical"/>
</dbReference>
<dbReference type="InterPro" id="IPR000798">
    <property type="entry name" value="Ez/rad/moesin-like"/>
</dbReference>
<dbReference type="InterPro" id="IPR014352">
    <property type="entry name" value="FERM/acyl-CoA-bd_prot_sf"/>
</dbReference>
<dbReference type="InterPro" id="IPR035963">
    <property type="entry name" value="FERM_2"/>
</dbReference>
<dbReference type="InterPro" id="IPR019748">
    <property type="entry name" value="FERM_central"/>
</dbReference>
<dbReference type="InterPro" id="IPR019747">
    <property type="entry name" value="FERM_CS"/>
</dbReference>
<dbReference type="InterPro" id="IPR000299">
    <property type="entry name" value="FERM_domain"/>
</dbReference>
<dbReference type="InterPro" id="IPR018979">
    <property type="entry name" value="FERM_N"/>
</dbReference>
<dbReference type="InterPro" id="IPR018980">
    <property type="entry name" value="FERM_PH-like_C"/>
</dbReference>
<dbReference type="InterPro" id="IPR008954">
    <property type="entry name" value="Moesin_tail_sf"/>
</dbReference>
<dbReference type="InterPro" id="IPR011993">
    <property type="entry name" value="PH-like_dom_sf"/>
</dbReference>
<dbReference type="InterPro" id="IPR029071">
    <property type="entry name" value="Ubiquitin-like_domsf"/>
</dbReference>
<dbReference type="PANTHER" id="PTHR23281">
    <property type="entry name" value="MERLIN/MOESIN/EZRIN/RADIXIN"/>
    <property type="match status" value="1"/>
</dbReference>
<dbReference type="Pfam" id="PF00769">
    <property type="entry name" value="ERM_C"/>
    <property type="match status" value="1"/>
</dbReference>
<dbReference type="Pfam" id="PF20492">
    <property type="entry name" value="ERM_helical"/>
    <property type="match status" value="1"/>
</dbReference>
<dbReference type="Pfam" id="PF09380">
    <property type="entry name" value="FERM_C"/>
    <property type="match status" value="1"/>
</dbReference>
<dbReference type="Pfam" id="PF00373">
    <property type="entry name" value="FERM_M"/>
    <property type="match status" value="1"/>
</dbReference>
<dbReference type="Pfam" id="PF09379">
    <property type="entry name" value="FERM_N"/>
    <property type="match status" value="1"/>
</dbReference>
<dbReference type="PIRSF" id="PIRSF002305">
    <property type="entry name" value="ERM"/>
    <property type="match status" value="1"/>
</dbReference>
<dbReference type="PRINTS" id="PR00935">
    <property type="entry name" value="BAND41"/>
</dbReference>
<dbReference type="PRINTS" id="PR00661">
    <property type="entry name" value="ERMFAMILY"/>
</dbReference>
<dbReference type="SMART" id="SM00295">
    <property type="entry name" value="B41"/>
    <property type="match status" value="1"/>
</dbReference>
<dbReference type="SMART" id="SM01196">
    <property type="entry name" value="FERM_C"/>
    <property type="match status" value="1"/>
</dbReference>
<dbReference type="SUPFAM" id="SSF48678">
    <property type="entry name" value="Moesin tail domain"/>
    <property type="match status" value="1"/>
</dbReference>
<dbReference type="SUPFAM" id="SSF50729">
    <property type="entry name" value="PH domain-like"/>
    <property type="match status" value="1"/>
</dbReference>
<dbReference type="SUPFAM" id="SSF47031">
    <property type="entry name" value="Second domain of FERM"/>
    <property type="match status" value="1"/>
</dbReference>
<dbReference type="SUPFAM" id="SSF54236">
    <property type="entry name" value="Ubiquitin-like"/>
    <property type="match status" value="1"/>
</dbReference>
<dbReference type="PROSITE" id="PS00660">
    <property type="entry name" value="FERM_1"/>
    <property type="match status" value="1"/>
</dbReference>
<dbReference type="PROSITE" id="PS00661">
    <property type="entry name" value="FERM_2"/>
    <property type="match status" value="1"/>
</dbReference>
<dbReference type="PROSITE" id="PS50057">
    <property type="entry name" value="FERM_3"/>
    <property type="match status" value="1"/>
</dbReference>
<accession>Q9PU45</accession>
<proteinExistence type="evidence at transcript level"/>
<gene>
    <name type="primary">RDX</name>
</gene>